<feature type="chain" id="PRO_0000172120" description="Putative pre-16S rRNA nuclease">
    <location>
        <begin position="1"/>
        <end position="141"/>
    </location>
</feature>
<organism>
    <name type="scientific">Pseudomonas putida (strain ATCC 47054 / DSM 6125 / CFBP 8728 / NCIMB 11950 / KT2440)</name>
    <dbReference type="NCBI Taxonomy" id="160488"/>
    <lineage>
        <taxon>Bacteria</taxon>
        <taxon>Pseudomonadati</taxon>
        <taxon>Pseudomonadota</taxon>
        <taxon>Gammaproteobacteria</taxon>
        <taxon>Pseudomonadales</taxon>
        <taxon>Pseudomonadaceae</taxon>
        <taxon>Pseudomonas</taxon>
    </lineage>
</organism>
<reference key="1">
    <citation type="journal article" date="2002" name="Environ. Microbiol.">
        <title>Complete genome sequence and comparative analysis of the metabolically versatile Pseudomonas putida KT2440.</title>
        <authorList>
            <person name="Nelson K.E."/>
            <person name="Weinel C."/>
            <person name="Paulsen I.T."/>
            <person name="Dodson R.J."/>
            <person name="Hilbert H."/>
            <person name="Martins dos Santos V.A.P."/>
            <person name="Fouts D.E."/>
            <person name="Gill S.R."/>
            <person name="Pop M."/>
            <person name="Holmes M."/>
            <person name="Brinkac L.M."/>
            <person name="Beanan M.J."/>
            <person name="DeBoy R.T."/>
            <person name="Daugherty S.C."/>
            <person name="Kolonay J.F."/>
            <person name="Madupu R."/>
            <person name="Nelson W.C."/>
            <person name="White O."/>
            <person name="Peterson J.D."/>
            <person name="Khouri H.M."/>
            <person name="Hance I."/>
            <person name="Chris Lee P."/>
            <person name="Holtzapple E.K."/>
            <person name="Scanlan D."/>
            <person name="Tran K."/>
            <person name="Moazzez A."/>
            <person name="Utterback T.R."/>
            <person name="Rizzo M."/>
            <person name="Lee K."/>
            <person name="Kosack D."/>
            <person name="Moestl D."/>
            <person name="Wedler H."/>
            <person name="Lauber J."/>
            <person name="Stjepandic D."/>
            <person name="Hoheisel J."/>
            <person name="Straetz M."/>
            <person name="Heim S."/>
            <person name="Kiewitz C."/>
            <person name="Eisen J.A."/>
            <person name="Timmis K.N."/>
            <person name="Duesterhoeft A."/>
            <person name="Tuemmler B."/>
            <person name="Fraser C.M."/>
        </authorList>
    </citation>
    <scope>NUCLEOTIDE SEQUENCE [LARGE SCALE GENOMIC DNA]</scope>
    <source>
        <strain>ATCC 47054 / DSM 6125 / CFBP 8728 / NCIMB 11950 / KT2440</strain>
    </source>
</reference>
<accession>Q88D32</accession>
<protein>
    <recommendedName>
        <fullName evidence="1">Putative pre-16S rRNA nuclease</fullName>
        <ecNumber evidence="1">3.1.-.-</ecNumber>
    </recommendedName>
</protein>
<name>YQGF_PSEPK</name>
<dbReference type="EC" id="3.1.-.-" evidence="1"/>
<dbReference type="EMBL" id="AE015451">
    <property type="protein sequence ID" value="AAN70562.1"/>
    <property type="molecule type" value="Genomic_DNA"/>
</dbReference>
<dbReference type="RefSeq" id="NP_747098.1">
    <property type="nucleotide sequence ID" value="NC_002947.4"/>
</dbReference>
<dbReference type="SMR" id="Q88D32"/>
<dbReference type="STRING" id="160488.PP_4996"/>
<dbReference type="PaxDb" id="160488-PP_4996"/>
<dbReference type="KEGG" id="ppu:PP_4996"/>
<dbReference type="PATRIC" id="fig|160488.4.peg.5337"/>
<dbReference type="eggNOG" id="COG0816">
    <property type="taxonomic scope" value="Bacteria"/>
</dbReference>
<dbReference type="HOGENOM" id="CLU_098240_3_0_6"/>
<dbReference type="OrthoDB" id="9796140at2"/>
<dbReference type="PhylomeDB" id="Q88D32"/>
<dbReference type="BioCyc" id="PPUT160488:G1G01-5341-MONOMER"/>
<dbReference type="Proteomes" id="UP000000556">
    <property type="component" value="Chromosome"/>
</dbReference>
<dbReference type="GO" id="GO:0005829">
    <property type="term" value="C:cytosol"/>
    <property type="evidence" value="ECO:0007669"/>
    <property type="project" value="TreeGrafter"/>
</dbReference>
<dbReference type="GO" id="GO:0004518">
    <property type="term" value="F:nuclease activity"/>
    <property type="evidence" value="ECO:0007669"/>
    <property type="project" value="UniProtKB-KW"/>
</dbReference>
<dbReference type="GO" id="GO:0000967">
    <property type="term" value="P:rRNA 5'-end processing"/>
    <property type="evidence" value="ECO:0007669"/>
    <property type="project" value="UniProtKB-UniRule"/>
</dbReference>
<dbReference type="CDD" id="cd16964">
    <property type="entry name" value="YqgF"/>
    <property type="match status" value="1"/>
</dbReference>
<dbReference type="FunFam" id="3.30.420.140:FF:000002">
    <property type="entry name" value="Putative pre-16S rRNA nuclease"/>
    <property type="match status" value="1"/>
</dbReference>
<dbReference type="Gene3D" id="3.30.420.140">
    <property type="entry name" value="YqgF/RNase H-like domain"/>
    <property type="match status" value="1"/>
</dbReference>
<dbReference type="HAMAP" id="MF_00651">
    <property type="entry name" value="Nuclease_YqgF"/>
    <property type="match status" value="1"/>
</dbReference>
<dbReference type="InterPro" id="IPR012337">
    <property type="entry name" value="RNaseH-like_sf"/>
</dbReference>
<dbReference type="InterPro" id="IPR005227">
    <property type="entry name" value="YqgF"/>
</dbReference>
<dbReference type="InterPro" id="IPR006641">
    <property type="entry name" value="YqgF/RNaseH-like_dom"/>
</dbReference>
<dbReference type="InterPro" id="IPR037027">
    <property type="entry name" value="YqgF/RNaseH-like_dom_sf"/>
</dbReference>
<dbReference type="NCBIfam" id="TIGR00250">
    <property type="entry name" value="RNAse_H_YqgF"/>
    <property type="match status" value="1"/>
</dbReference>
<dbReference type="PANTHER" id="PTHR33317">
    <property type="entry name" value="POLYNUCLEOTIDYL TRANSFERASE, RIBONUCLEASE H-LIKE SUPERFAMILY PROTEIN"/>
    <property type="match status" value="1"/>
</dbReference>
<dbReference type="PANTHER" id="PTHR33317:SF4">
    <property type="entry name" value="POLYNUCLEOTIDYL TRANSFERASE, RIBONUCLEASE H-LIKE SUPERFAMILY PROTEIN"/>
    <property type="match status" value="1"/>
</dbReference>
<dbReference type="Pfam" id="PF03652">
    <property type="entry name" value="RuvX"/>
    <property type="match status" value="1"/>
</dbReference>
<dbReference type="SMART" id="SM00732">
    <property type="entry name" value="YqgFc"/>
    <property type="match status" value="1"/>
</dbReference>
<dbReference type="SUPFAM" id="SSF53098">
    <property type="entry name" value="Ribonuclease H-like"/>
    <property type="match status" value="1"/>
</dbReference>
<gene>
    <name type="ordered locus">PP_4996</name>
</gene>
<comment type="function">
    <text evidence="1">Could be a nuclease involved in processing of the 5'-end of pre-16S rRNA.</text>
</comment>
<comment type="subcellular location">
    <subcellularLocation>
        <location evidence="1">Cytoplasm</location>
    </subcellularLocation>
</comment>
<comment type="similarity">
    <text evidence="1">Belongs to the YqgF nuclease family.</text>
</comment>
<keyword id="KW-0963">Cytoplasm</keyword>
<keyword id="KW-0378">Hydrolase</keyword>
<keyword id="KW-0540">Nuclease</keyword>
<keyword id="KW-1185">Reference proteome</keyword>
<keyword id="KW-0690">Ribosome biogenesis</keyword>
<proteinExistence type="inferred from homology"/>
<sequence length="141" mass="15460">MADLRLLLGFDYGSKQIGVAVGQVITGQARELCTLKAQNGVPDWAQVEKLIAEWKPDAIVVGLPLNMDGTPSEMSARAEKFARRLNGRFNLPVHTHDERLTTFEAKGERMARGGQRGSYRDNPVDAIAAALLLQGWLEANT</sequence>
<evidence type="ECO:0000255" key="1">
    <source>
        <dbReference type="HAMAP-Rule" id="MF_00651"/>
    </source>
</evidence>